<comment type="similarity">
    <text evidence="2">Belongs to the UPF0758 family.</text>
</comment>
<reference key="1">
    <citation type="submission" date="2009-04" db="EMBL/GenBank/DDBJ databases">
        <title>Genome sequence of Bacillus anthracis A0248.</title>
        <authorList>
            <person name="Dodson R.J."/>
            <person name="Munk A.C."/>
            <person name="Bruce D."/>
            <person name="Detter C."/>
            <person name="Tapia R."/>
            <person name="Sutton G."/>
            <person name="Sims D."/>
            <person name="Brettin T."/>
        </authorList>
    </citation>
    <scope>NUCLEOTIDE SEQUENCE [LARGE SCALE GENOMIC DNA]</scope>
    <source>
        <strain>A0248</strain>
    </source>
</reference>
<dbReference type="EMBL" id="CP001598">
    <property type="protein sequence ID" value="ACQ47539.1"/>
    <property type="molecule type" value="Genomic_DNA"/>
</dbReference>
<dbReference type="RefSeq" id="WP_001013377.1">
    <property type="nucleotide sequence ID" value="NC_012659.1"/>
</dbReference>
<dbReference type="SMR" id="C3P9D9"/>
<dbReference type="GeneID" id="45024326"/>
<dbReference type="KEGG" id="bai:BAA_4704"/>
<dbReference type="HOGENOM" id="CLU_073529_0_2_9"/>
<dbReference type="GO" id="GO:0046872">
    <property type="term" value="F:metal ion binding"/>
    <property type="evidence" value="ECO:0007669"/>
    <property type="project" value="UniProtKB-KW"/>
</dbReference>
<dbReference type="GO" id="GO:0008237">
    <property type="term" value="F:metallopeptidase activity"/>
    <property type="evidence" value="ECO:0007669"/>
    <property type="project" value="UniProtKB-KW"/>
</dbReference>
<dbReference type="GO" id="GO:0006508">
    <property type="term" value="P:proteolysis"/>
    <property type="evidence" value="ECO:0007669"/>
    <property type="project" value="UniProtKB-KW"/>
</dbReference>
<dbReference type="CDD" id="cd08071">
    <property type="entry name" value="MPN_DUF2466"/>
    <property type="match status" value="1"/>
</dbReference>
<dbReference type="Gene3D" id="3.40.140.10">
    <property type="entry name" value="Cytidine Deaminase, domain 2"/>
    <property type="match status" value="1"/>
</dbReference>
<dbReference type="InterPro" id="IPR037518">
    <property type="entry name" value="MPN"/>
</dbReference>
<dbReference type="InterPro" id="IPR025657">
    <property type="entry name" value="RadC_JAB"/>
</dbReference>
<dbReference type="InterPro" id="IPR010994">
    <property type="entry name" value="RuvA_2-like"/>
</dbReference>
<dbReference type="InterPro" id="IPR001405">
    <property type="entry name" value="UPF0758"/>
</dbReference>
<dbReference type="InterPro" id="IPR020891">
    <property type="entry name" value="UPF0758_CS"/>
</dbReference>
<dbReference type="InterPro" id="IPR046778">
    <property type="entry name" value="UPF0758_N"/>
</dbReference>
<dbReference type="NCBIfam" id="NF000642">
    <property type="entry name" value="PRK00024.1"/>
    <property type="match status" value="1"/>
</dbReference>
<dbReference type="NCBIfam" id="TIGR00608">
    <property type="entry name" value="radc"/>
    <property type="match status" value="1"/>
</dbReference>
<dbReference type="PANTHER" id="PTHR30471">
    <property type="entry name" value="DNA REPAIR PROTEIN RADC"/>
    <property type="match status" value="1"/>
</dbReference>
<dbReference type="PANTHER" id="PTHR30471:SF3">
    <property type="entry name" value="UPF0758 PROTEIN YEES-RELATED"/>
    <property type="match status" value="1"/>
</dbReference>
<dbReference type="Pfam" id="PF04002">
    <property type="entry name" value="RadC"/>
    <property type="match status" value="1"/>
</dbReference>
<dbReference type="Pfam" id="PF20582">
    <property type="entry name" value="UPF0758_N"/>
    <property type="match status" value="1"/>
</dbReference>
<dbReference type="SUPFAM" id="SSF102712">
    <property type="entry name" value="JAB1/MPN domain"/>
    <property type="match status" value="1"/>
</dbReference>
<dbReference type="SUPFAM" id="SSF47781">
    <property type="entry name" value="RuvA domain 2-like"/>
    <property type="match status" value="1"/>
</dbReference>
<dbReference type="PROSITE" id="PS50249">
    <property type="entry name" value="MPN"/>
    <property type="match status" value="1"/>
</dbReference>
<dbReference type="PROSITE" id="PS01302">
    <property type="entry name" value="UPF0758"/>
    <property type="match status" value="1"/>
</dbReference>
<keyword id="KW-0378">Hydrolase</keyword>
<keyword id="KW-0479">Metal-binding</keyword>
<keyword id="KW-0482">Metalloprotease</keyword>
<keyword id="KW-0645">Protease</keyword>
<keyword id="KW-0862">Zinc</keyword>
<evidence type="ECO:0000255" key="1">
    <source>
        <dbReference type="PROSITE-ProRule" id="PRU01182"/>
    </source>
</evidence>
<evidence type="ECO:0000305" key="2"/>
<organism>
    <name type="scientific">Bacillus anthracis (strain A0248)</name>
    <dbReference type="NCBI Taxonomy" id="592021"/>
    <lineage>
        <taxon>Bacteria</taxon>
        <taxon>Bacillati</taxon>
        <taxon>Bacillota</taxon>
        <taxon>Bacilli</taxon>
        <taxon>Bacillales</taxon>
        <taxon>Bacillaceae</taxon>
        <taxon>Bacillus</taxon>
        <taxon>Bacillus cereus group</taxon>
    </lineage>
</organism>
<gene>
    <name type="ordered locus">BAA_4704</name>
</gene>
<proteinExistence type="inferred from homology"/>
<name>Y4704_BACAA</name>
<accession>C3P9D9</accession>
<feature type="chain" id="PRO_1000195282" description="UPF0758 protein BAA_4704">
    <location>
        <begin position="1"/>
        <end position="225"/>
    </location>
</feature>
<feature type="domain" description="MPN" evidence="1">
    <location>
        <begin position="103"/>
        <end position="225"/>
    </location>
</feature>
<feature type="short sequence motif" description="JAMM motif" evidence="1">
    <location>
        <begin position="174"/>
        <end position="187"/>
    </location>
</feature>
<feature type="binding site" evidence="1">
    <location>
        <position position="174"/>
    </location>
    <ligand>
        <name>Zn(2+)</name>
        <dbReference type="ChEBI" id="CHEBI:29105"/>
        <note>catalytic</note>
    </ligand>
</feature>
<feature type="binding site" evidence="1">
    <location>
        <position position="176"/>
    </location>
    <ligand>
        <name>Zn(2+)</name>
        <dbReference type="ChEBI" id="CHEBI:29105"/>
        <note>catalytic</note>
    </ligand>
</feature>
<feature type="binding site" evidence="1">
    <location>
        <position position="187"/>
    </location>
    <ligand>
        <name>Zn(2+)</name>
        <dbReference type="ChEBI" id="CHEBI:29105"/>
        <note>catalytic</note>
    </ligand>
</feature>
<protein>
    <recommendedName>
        <fullName>UPF0758 protein BAA_4704</fullName>
    </recommendedName>
</protein>
<sequence length="225" mass="25632">MNGIRDVVKEEQPRERLLLEGAGSLSNRELLAVLLRTGSKEESVLKLSDKILHHFDGLRMLKDATLEELVSIHGVGVAKATQLIAAFELGRRMVRLEYQNRYSIRSPEDCATYMMEEMRFLQQEHFVCLYLNTKNQVIHRQTIFIGSLNSSIVHPREVFKEAFRRAAASIICLHNHPSGDPAPSREDIEVTKRLVECGRIIGIEVLDHIIIGDHKFVSLKEKGHI</sequence>